<organism>
    <name type="scientific">Aliarcobacter butzleri (strain RM4018)</name>
    <name type="common">Arcobacter butzleri</name>
    <dbReference type="NCBI Taxonomy" id="367737"/>
    <lineage>
        <taxon>Bacteria</taxon>
        <taxon>Pseudomonadati</taxon>
        <taxon>Campylobacterota</taxon>
        <taxon>Epsilonproteobacteria</taxon>
        <taxon>Campylobacterales</taxon>
        <taxon>Arcobacteraceae</taxon>
        <taxon>Aliarcobacter</taxon>
    </lineage>
</organism>
<proteinExistence type="inferred from homology"/>
<protein>
    <recommendedName>
        <fullName evidence="1">Glutamate--tRNA ligase 1</fullName>
        <ecNumber evidence="1">6.1.1.17</ecNumber>
    </recommendedName>
    <alternativeName>
        <fullName evidence="1">Glutamyl-tRNA synthetase 1</fullName>
        <shortName evidence="1">GluRS 1</shortName>
    </alternativeName>
</protein>
<feature type="chain" id="PRO_0000330951" description="Glutamate--tRNA ligase 1">
    <location>
        <begin position="1"/>
        <end position="469"/>
    </location>
</feature>
<feature type="region of interest" description="Disordered" evidence="2">
    <location>
        <begin position="117"/>
        <end position="137"/>
    </location>
</feature>
<feature type="short sequence motif" description="'HIGH' region" evidence="1">
    <location>
        <begin position="8"/>
        <end position="18"/>
    </location>
</feature>
<feature type="short sequence motif" description="'KMSKS' region" evidence="1">
    <location>
        <begin position="240"/>
        <end position="244"/>
    </location>
</feature>
<feature type="binding site" evidence="1">
    <location>
        <position position="243"/>
    </location>
    <ligand>
        <name>ATP</name>
        <dbReference type="ChEBI" id="CHEBI:30616"/>
    </ligand>
</feature>
<reference key="1">
    <citation type="journal article" date="2007" name="PLoS ONE">
        <title>The complete genome sequence and analysis of the Epsilonproteobacterium Arcobacter butzleri.</title>
        <authorList>
            <person name="Miller W.G."/>
            <person name="Parker C.T."/>
            <person name="Rubenfield M."/>
            <person name="Mendz G.L."/>
            <person name="Woesten M.M.S.M."/>
            <person name="Ussery D.W."/>
            <person name="Stolz J.F."/>
            <person name="Binnewies T.T."/>
            <person name="Hallin P.F."/>
            <person name="Wang G."/>
            <person name="Malek J.A."/>
            <person name="Rogosin A."/>
            <person name="Stanker L.H."/>
            <person name="Mandrell R.E."/>
        </authorList>
    </citation>
    <scope>NUCLEOTIDE SEQUENCE [LARGE SCALE GENOMIC DNA]</scope>
    <source>
        <strain>RM4018</strain>
    </source>
</reference>
<dbReference type="EC" id="6.1.1.17" evidence="1"/>
<dbReference type="EMBL" id="CP000361">
    <property type="protein sequence ID" value="ABV66343.1"/>
    <property type="molecule type" value="Genomic_DNA"/>
</dbReference>
<dbReference type="RefSeq" id="WP_012011968.1">
    <property type="nucleotide sequence ID" value="NC_009850.1"/>
</dbReference>
<dbReference type="SMR" id="A8EQW9"/>
<dbReference type="STRING" id="367737.Abu_0058"/>
<dbReference type="GeneID" id="24304370"/>
<dbReference type="KEGG" id="abu:Abu_0058"/>
<dbReference type="eggNOG" id="COG0008">
    <property type="taxonomic scope" value="Bacteria"/>
</dbReference>
<dbReference type="HOGENOM" id="CLU_015768_6_0_7"/>
<dbReference type="Proteomes" id="UP000001136">
    <property type="component" value="Chromosome"/>
</dbReference>
<dbReference type="GO" id="GO:0005829">
    <property type="term" value="C:cytosol"/>
    <property type="evidence" value="ECO:0007669"/>
    <property type="project" value="TreeGrafter"/>
</dbReference>
<dbReference type="GO" id="GO:0005524">
    <property type="term" value="F:ATP binding"/>
    <property type="evidence" value="ECO:0007669"/>
    <property type="project" value="UniProtKB-UniRule"/>
</dbReference>
<dbReference type="GO" id="GO:0004818">
    <property type="term" value="F:glutamate-tRNA ligase activity"/>
    <property type="evidence" value="ECO:0007669"/>
    <property type="project" value="UniProtKB-UniRule"/>
</dbReference>
<dbReference type="GO" id="GO:0000049">
    <property type="term" value="F:tRNA binding"/>
    <property type="evidence" value="ECO:0007669"/>
    <property type="project" value="InterPro"/>
</dbReference>
<dbReference type="GO" id="GO:0008270">
    <property type="term" value="F:zinc ion binding"/>
    <property type="evidence" value="ECO:0007669"/>
    <property type="project" value="InterPro"/>
</dbReference>
<dbReference type="GO" id="GO:0006424">
    <property type="term" value="P:glutamyl-tRNA aminoacylation"/>
    <property type="evidence" value="ECO:0007669"/>
    <property type="project" value="UniProtKB-UniRule"/>
</dbReference>
<dbReference type="CDD" id="cd00808">
    <property type="entry name" value="GluRS_core"/>
    <property type="match status" value="1"/>
</dbReference>
<dbReference type="FunFam" id="3.40.50.620:FF:000007">
    <property type="entry name" value="Glutamate--tRNA ligase"/>
    <property type="match status" value="1"/>
</dbReference>
<dbReference type="Gene3D" id="1.10.10.350">
    <property type="match status" value="1"/>
</dbReference>
<dbReference type="Gene3D" id="3.40.50.620">
    <property type="entry name" value="HUPs"/>
    <property type="match status" value="1"/>
</dbReference>
<dbReference type="HAMAP" id="MF_00022">
    <property type="entry name" value="Glu_tRNA_synth_type1"/>
    <property type="match status" value="1"/>
</dbReference>
<dbReference type="InterPro" id="IPR045462">
    <property type="entry name" value="aa-tRNA-synth_I_cd-bd"/>
</dbReference>
<dbReference type="InterPro" id="IPR020751">
    <property type="entry name" value="aa-tRNA-synth_I_codon-bd_sub2"/>
</dbReference>
<dbReference type="InterPro" id="IPR001412">
    <property type="entry name" value="aa-tRNA-synth_I_CS"/>
</dbReference>
<dbReference type="InterPro" id="IPR008925">
    <property type="entry name" value="aa_tRNA-synth_I_cd-bd_sf"/>
</dbReference>
<dbReference type="InterPro" id="IPR004527">
    <property type="entry name" value="Glu-tRNA-ligase_bac/mito"/>
</dbReference>
<dbReference type="InterPro" id="IPR000924">
    <property type="entry name" value="Glu/Gln-tRNA-synth"/>
</dbReference>
<dbReference type="InterPro" id="IPR020058">
    <property type="entry name" value="Glu/Gln-tRNA-synth_Ib_cat-dom"/>
</dbReference>
<dbReference type="InterPro" id="IPR049940">
    <property type="entry name" value="GluQ/Sye"/>
</dbReference>
<dbReference type="InterPro" id="IPR033910">
    <property type="entry name" value="GluRS_core"/>
</dbReference>
<dbReference type="InterPro" id="IPR014729">
    <property type="entry name" value="Rossmann-like_a/b/a_fold"/>
</dbReference>
<dbReference type="NCBIfam" id="TIGR00464">
    <property type="entry name" value="gltX_bact"/>
    <property type="match status" value="1"/>
</dbReference>
<dbReference type="PANTHER" id="PTHR43311">
    <property type="entry name" value="GLUTAMATE--TRNA LIGASE"/>
    <property type="match status" value="1"/>
</dbReference>
<dbReference type="PANTHER" id="PTHR43311:SF2">
    <property type="entry name" value="GLUTAMATE--TRNA LIGASE, MITOCHONDRIAL-RELATED"/>
    <property type="match status" value="1"/>
</dbReference>
<dbReference type="Pfam" id="PF19269">
    <property type="entry name" value="Anticodon_2"/>
    <property type="match status" value="1"/>
</dbReference>
<dbReference type="Pfam" id="PF00749">
    <property type="entry name" value="tRNA-synt_1c"/>
    <property type="match status" value="1"/>
</dbReference>
<dbReference type="PRINTS" id="PR00987">
    <property type="entry name" value="TRNASYNTHGLU"/>
</dbReference>
<dbReference type="SUPFAM" id="SSF48163">
    <property type="entry name" value="An anticodon-binding domain of class I aminoacyl-tRNA synthetases"/>
    <property type="match status" value="1"/>
</dbReference>
<dbReference type="SUPFAM" id="SSF52374">
    <property type="entry name" value="Nucleotidylyl transferase"/>
    <property type="match status" value="1"/>
</dbReference>
<dbReference type="PROSITE" id="PS00178">
    <property type="entry name" value="AA_TRNA_LIGASE_I"/>
    <property type="match status" value="1"/>
</dbReference>
<comment type="function">
    <text evidence="1">Catalyzes the attachment of glutamate to tRNA(Glu) in a two-step reaction: glutamate is first activated by ATP to form Glu-AMP and then transferred to the acceptor end of tRNA(Glu).</text>
</comment>
<comment type="catalytic activity">
    <reaction evidence="1">
        <text>tRNA(Glu) + L-glutamate + ATP = L-glutamyl-tRNA(Glu) + AMP + diphosphate</text>
        <dbReference type="Rhea" id="RHEA:23540"/>
        <dbReference type="Rhea" id="RHEA-COMP:9663"/>
        <dbReference type="Rhea" id="RHEA-COMP:9680"/>
        <dbReference type="ChEBI" id="CHEBI:29985"/>
        <dbReference type="ChEBI" id="CHEBI:30616"/>
        <dbReference type="ChEBI" id="CHEBI:33019"/>
        <dbReference type="ChEBI" id="CHEBI:78442"/>
        <dbReference type="ChEBI" id="CHEBI:78520"/>
        <dbReference type="ChEBI" id="CHEBI:456215"/>
        <dbReference type="EC" id="6.1.1.17"/>
    </reaction>
</comment>
<comment type="subunit">
    <text evidence="1">Monomer.</text>
</comment>
<comment type="subcellular location">
    <subcellularLocation>
        <location evidence="1">Cytoplasm</location>
    </subcellularLocation>
</comment>
<comment type="similarity">
    <text evidence="1">Belongs to the class-I aminoacyl-tRNA synthetase family. Glutamate--tRNA ligase type 1 subfamily.</text>
</comment>
<keyword id="KW-0030">Aminoacyl-tRNA synthetase</keyword>
<keyword id="KW-0067">ATP-binding</keyword>
<keyword id="KW-0963">Cytoplasm</keyword>
<keyword id="KW-0436">Ligase</keyword>
<keyword id="KW-0547">Nucleotide-binding</keyword>
<keyword id="KW-0648">Protein biosynthesis</keyword>
<keyword id="KW-1185">Reference proteome</keyword>
<evidence type="ECO:0000255" key="1">
    <source>
        <dbReference type="HAMAP-Rule" id="MF_00022"/>
    </source>
</evidence>
<evidence type="ECO:0000256" key="2">
    <source>
        <dbReference type="SAM" id="MobiDB-lite"/>
    </source>
</evidence>
<gene>
    <name evidence="1" type="primary">gltX1</name>
    <name type="ordered locus">Abu_0058</name>
</gene>
<accession>A8EQW9</accession>
<sequence length="469" mass="53551">MAITRFAPSPTGYLHIGGLRTSLYSYLWARKTGGEFRLRIEDTDLARNSEEAMKAIIDAFDWVGLNYDGEVFYQSKRTDIYKQYIDKLLESGNAYKCYMSKEELDALRAAQEAAKQTPRYDGTWRPEPGKELPPVPAGVEPVIRIKAPTTGTIEFDDGVKGHMKFDANQVDDYVIARSNGMPTYNFVVAIDDALMGMTDVIRGDDHLSNTPKQIVVYNALGFKVPKFYHVPMINNPEGKKLSKRDGAMDVMDYKRLGYLPEALLNFLVRLGWSNGDQEIFSMKEMLELFDPSNINKSASSYNGEKLLWLNSEYIKAVSNERLIEELKFFDLDLSNYPKKNEILDLAKQRAQTLVELKKSITDIIDIPTSYEESGVKKFIKEDTKELLEKYLLLLESNKNSLDSVEKIEEFTKPFINDNGLKFPQLFQPIRIALTGGTQAPSVYDIIFILGYDEIFKRINEALKRNFQNT</sequence>
<name>SYE1_ALIB4</name>